<accession>Q9FLV9</accession>
<keyword id="KW-1003">Cell membrane</keyword>
<keyword id="KW-0406">Ion transport</keyword>
<keyword id="KW-0472">Membrane</keyword>
<keyword id="KW-0597">Phosphoprotein</keyword>
<keyword id="KW-1185">Reference proteome</keyword>
<keyword id="KW-0812">Transmembrane</keyword>
<keyword id="KW-1133">Transmembrane helix</keyword>
<keyword id="KW-0813">Transport</keyword>
<name>SLAH3_ARATH</name>
<proteinExistence type="evidence at protein level"/>
<comment type="function">
    <text evidence="6 7">Slow, weak voltage-dependent S-type anion efflux channel involved in maintenance of anion homeostasis (PubMed:18305482). Binds to the highly selective inward-rectifying potassium channel KAT1 and inhibits its activity. Functions as an essential negative regulator of inward potassium channels in guard cells. Essential for the efficient stomatal closure and opening in guard cells (PubMed:27002025).</text>
</comment>
<comment type="subunit">
    <text evidence="1 7">Homotrimer (By similarity). Interacts with KAT1 (PubMed:27002025).</text>
</comment>
<comment type="subcellular location">
    <subcellularLocation>
        <location evidence="5 6">Cell membrane</location>
        <topology evidence="5 6">Multi-pass membrane protein</topology>
    </subcellularLocation>
</comment>
<comment type="tissue specificity">
    <text evidence="6">Expressed in the whole plant, escpecially in vascular systems.</text>
</comment>
<comment type="induction">
    <text evidence="7">By drought stress in guard cells.</text>
</comment>
<comment type="similarity">
    <text evidence="8">Belongs to the SLAC1 S-type anion channel family.</text>
</comment>
<gene>
    <name type="primary">SLAH3</name>
    <name type="ordered locus">At5g24030</name>
    <name type="ORF">MZF18.9</name>
</gene>
<organism>
    <name type="scientific">Arabidopsis thaliana</name>
    <name type="common">Mouse-ear cress</name>
    <dbReference type="NCBI Taxonomy" id="3702"/>
    <lineage>
        <taxon>Eukaryota</taxon>
        <taxon>Viridiplantae</taxon>
        <taxon>Streptophyta</taxon>
        <taxon>Embryophyta</taxon>
        <taxon>Tracheophyta</taxon>
        <taxon>Spermatophyta</taxon>
        <taxon>Magnoliopsida</taxon>
        <taxon>eudicotyledons</taxon>
        <taxon>Gunneridae</taxon>
        <taxon>Pentapetalae</taxon>
        <taxon>rosids</taxon>
        <taxon>malvids</taxon>
        <taxon>Brassicales</taxon>
        <taxon>Brassicaceae</taxon>
        <taxon>Camelineae</taxon>
        <taxon>Arabidopsis</taxon>
    </lineage>
</organism>
<feature type="chain" id="PRO_0000404262" description="S-type anion channel SLAH3">
    <location>
        <begin position="1"/>
        <end position="635"/>
    </location>
</feature>
<feature type="topological domain" description="Cytoplasmic" evidence="8">
    <location>
        <begin position="1"/>
        <end position="253"/>
    </location>
</feature>
<feature type="transmembrane region" description="Helical" evidence="3">
    <location>
        <begin position="254"/>
        <end position="276"/>
    </location>
</feature>
<feature type="topological domain" description="Extracellular" evidence="8">
    <location>
        <begin position="277"/>
        <end position="299"/>
    </location>
</feature>
<feature type="transmembrane region" description="Helical" evidence="3">
    <location>
        <begin position="300"/>
        <end position="320"/>
    </location>
</feature>
<feature type="topological domain" description="Cytoplasmic" evidence="8">
    <location>
        <begin position="321"/>
        <end position="335"/>
    </location>
</feature>
<feature type="transmembrane region" description="Helical" evidence="3">
    <location>
        <begin position="336"/>
        <end position="356"/>
    </location>
</feature>
<feature type="topological domain" description="Extracellular" evidence="8">
    <location>
        <begin position="357"/>
        <end position="358"/>
    </location>
</feature>
<feature type="transmembrane region" description="Helical" evidence="3">
    <location>
        <begin position="359"/>
        <end position="379"/>
    </location>
</feature>
<feature type="topological domain" description="Cytoplasmic" evidence="8">
    <location>
        <begin position="380"/>
        <end position="396"/>
    </location>
</feature>
<feature type="transmembrane region" description="Helical" evidence="3">
    <location>
        <begin position="397"/>
        <end position="417"/>
    </location>
</feature>
<feature type="topological domain" description="Extracellular" evidence="8">
    <location>
        <begin position="418"/>
        <end position="419"/>
    </location>
</feature>
<feature type="transmembrane region" description="Helical" evidence="3">
    <location>
        <begin position="420"/>
        <end position="440"/>
    </location>
</feature>
<feature type="topological domain" description="Cytoplasmic" evidence="8">
    <location>
        <begin position="441"/>
        <end position="455"/>
    </location>
</feature>
<feature type="transmembrane region" description="Helical" evidence="3">
    <location>
        <begin position="456"/>
        <end position="476"/>
    </location>
</feature>
<feature type="topological domain" description="Extracellular" evidence="8">
    <location>
        <position position="477"/>
    </location>
</feature>
<feature type="transmembrane region" description="Helical" evidence="3">
    <location>
        <begin position="478"/>
        <end position="498"/>
    </location>
</feature>
<feature type="topological domain" description="Cytoplasmic" evidence="8">
    <location>
        <begin position="499"/>
        <end position="504"/>
    </location>
</feature>
<feature type="transmembrane region" description="Helical" evidence="3">
    <location>
        <begin position="505"/>
        <end position="525"/>
    </location>
</feature>
<feature type="topological domain" description="Extracellular" evidence="8">
    <location>
        <begin position="526"/>
        <end position="541"/>
    </location>
</feature>
<feature type="transmembrane region" description="Helical" evidence="3">
    <location>
        <begin position="542"/>
        <end position="562"/>
    </location>
</feature>
<feature type="topological domain" description="Cytoplasmic" evidence="8">
    <location>
        <begin position="563"/>
        <end position="635"/>
    </location>
</feature>
<feature type="region of interest" description="Disordered" evidence="4">
    <location>
        <begin position="102"/>
        <end position="173"/>
    </location>
</feature>
<feature type="region of interest" description="Disordered" evidence="4">
    <location>
        <begin position="193"/>
        <end position="217"/>
    </location>
</feature>
<feature type="region of interest" description="Disordered" evidence="4">
    <location>
        <begin position="611"/>
        <end position="635"/>
    </location>
</feature>
<feature type="compositionally biased region" description="Polar residues" evidence="4">
    <location>
        <begin position="102"/>
        <end position="121"/>
    </location>
</feature>
<feature type="compositionally biased region" description="Basic residues" evidence="4">
    <location>
        <begin position="153"/>
        <end position="165"/>
    </location>
</feature>
<feature type="compositionally biased region" description="Polar residues" evidence="4">
    <location>
        <begin position="614"/>
        <end position="635"/>
    </location>
</feature>
<feature type="modified residue" description="Phosphoserine" evidence="2">
    <location>
        <position position="189"/>
    </location>
</feature>
<protein>
    <recommendedName>
        <fullName>S-type anion channel SLAH3</fullName>
    </recommendedName>
    <alternativeName>
        <fullName>SLAC1-homolog protein 3</fullName>
    </alternativeName>
</protein>
<sequence length="635" mass="72339">MEEKPNYVIQVEEELPTLLRKATTEEMVGFDNYKENGHPFPHSISRFHPSHASTTTLNGQETSRSIDTMEAHHHNYNETTPWTHQRKPSISMPTSPNVLMISDPTTSLSSENHKNSGSTGKSVKFLSQPMTKVSSLYIESGNGDDDRRQSHDNHHHHLHRQHQSGHHQNQNQAANKLKDNRYNSFKTWSGKLERQFTRKPASVEPEAPNRNNQNLNTNEAMPVDRYYDALEGPELETLRPQEEIVLPNDKKWPFLLRYPISTFGMCLGVSSQAIMWKTLATAEPTKFLHVPLWINQGLWFISVALILTIATIYLLKIILFFEAVRREYYHPIRINFFFAPFISLLFLALGVPPSIITDLPHFLWYLLMFPFICLELKIYGQWMSGGQRRLSRVANPTNHLSVVGNFVGALLGASMGLREGPIFFYAVGMAHYLVLFVTLYQRLPTNETLPKDLHPVFFLFVAAPSVASMAWAKVTGSFDYGSKVCYFIAIFLYFSLAVRINFFRGIKFSLSWWAYTFPMTGAAIATIRYATVVKSTMTQIMCVVLCAIATLVVFALLVTTIIHAFVLRDLFPNDLAIAISNRPRPKQNSQHRWLDQLRNVSSENIENYLKFTDSDSSQSNDVEACNGKTQESDSS</sequence>
<evidence type="ECO:0000250" key="1"/>
<evidence type="ECO:0000250" key="2">
    <source>
        <dbReference type="UniProtKB" id="Q9LD83"/>
    </source>
</evidence>
<evidence type="ECO:0000255" key="3"/>
<evidence type="ECO:0000256" key="4">
    <source>
        <dbReference type="SAM" id="MobiDB-lite"/>
    </source>
</evidence>
<evidence type="ECO:0000269" key="5">
    <source>
    </source>
</evidence>
<evidence type="ECO:0000269" key="6">
    <source>
    </source>
</evidence>
<evidence type="ECO:0000269" key="7">
    <source>
    </source>
</evidence>
<evidence type="ECO:0000305" key="8"/>
<reference key="1">
    <citation type="journal article" date="1998" name="DNA Res.">
        <title>Structural analysis of Arabidopsis thaliana chromosome 5. IV. Sequence features of the regions of 1,456,315 bp covered by nineteen physically assigned P1 and TAC clones.</title>
        <authorList>
            <person name="Sato S."/>
            <person name="Kaneko T."/>
            <person name="Kotani H."/>
            <person name="Nakamura Y."/>
            <person name="Asamizu E."/>
            <person name="Miyajima N."/>
            <person name="Tabata S."/>
        </authorList>
    </citation>
    <scope>NUCLEOTIDE SEQUENCE [LARGE SCALE GENOMIC DNA]</scope>
    <source>
        <strain>cv. Columbia</strain>
    </source>
</reference>
<reference key="2">
    <citation type="journal article" date="2017" name="Plant J.">
        <title>Araport11: a complete reannotation of the Arabidopsis thaliana reference genome.</title>
        <authorList>
            <person name="Cheng C.Y."/>
            <person name="Krishnakumar V."/>
            <person name="Chan A.P."/>
            <person name="Thibaud-Nissen F."/>
            <person name="Schobel S."/>
            <person name="Town C.D."/>
        </authorList>
    </citation>
    <scope>GENOME REANNOTATION</scope>
    <source>
        <strain>cv. Columbia</strain>
    </source>
</reference>
<reference key="3">
    <citation type="submission" date="2004-09" db="EMBL/GenBank/DDBJ databases">
        <title>Arabidopsis ORF clones.</title>
        <authorList>
            <person name="Cheuk R.F."/>
            <person name="Chen H."/>
            <person name="Kim C.J."/>
            <person name="Shinn P."/>
            <person name="Ecker J.R."/>
        </authorList>
    </citation>
    <scope>NUCLEOTIDE SEQUENCE [LARGE SCALE MRNA]</scope>
    <source>
        <strain>cv. Columbia</strain>
    </source>
</reference>
<reference key="4">
    <citation type="journal article" date="2003" name="Mol. Cell. Proteomics">
        <title>Large-scale analysis of in vivo phosphorylated membrane proteins by immobilized metal ion affinity chromatography and mass spectrometry.</title>
        <authorList>
            <person name="Nuehse T.S."/>
            <person name="Stensballe A."/>
            <person name="Jensen O.N."/>
            <person name="Peck S.C."/>
        </authorList>
    </citation>
    <scope>SUBCELLULAR LOCATION</scope>
    <scope>IDENTIFICATION BY MASS SPECTROMETRY [LARGE SCALE ANALYSIS]</scope>
    <source>
        <strain>cv. La-0</strain>
    </source>
</reference>
<reference key="5">
    <citation type="journal article" date="2004" name="Plant Cell">
        <title>Phosphoproteomics of the Arabidopsis plasma membrane and a new phosphorylation site database.</title>
        <authorList>
            <person name="Nuehse T.S."/>
            <person name="Stensballe A."/>
            <person name="Jensen O.N."/>
            <person name="Peck S.C."/>
        </authorList>
    </citation>
    <scope>IDENTIFICATION BY MASS SPECTROMETRY [LARGE SCALE ANALYSIS]</scope>
</reference>
<reference key="6">
    <citation type="journal article" date="2008" name="Nature">
        <title>CO2 regulator SLAC1 and its homologues are essential for anion homeostasis in plant cells.</title>
        <authorList>
            <person name="Negi J."/>
            <person name="Matsuda O."/>
            <person name="Nagasawa T."/>
            <person name="Oba Y."/>
            <person name="Takahashi H."/>
            <person name="Kawai-Yamada M."/>
            <person name="Uchimiya H."/>
            <person name="Hashimoto M."/>
            <person name="Iba K."/>
        </authorList>
    </citation>
    <scope>FUNCTION</scope>
    <scope>SUBCELLULAR LOCATION</scope>
    <scope>TISSUE SPECIFICITY</scope>
    <scope>GENE FAMILY</scope>
    <scope>NOMENCLATURE</scope>
    <source>
        <strain>cv. Columbia</strain>
    </source>
</reference>
<reference key="7">
    <citation type="journal article" date="2016" name="Plant Cell">
        <title>S-type anion channels SLAC1 and SLAH3 function as essential negative regulators of inward K+ channels and stomatal opening in Arabidopsis.</title>
        <authorList>
            <person name="Zhang A."/>
            <person name="Ren H.M."/>
            <person name="Tan Y.Q."/>
            <person name="Qi G.N."/>
            <person name="Yao F.Y."/>
            <person name="Wu G.L."/>
            <person name="Yang L.W."/>
            <person name="Hussain J."/>
            <person name="Sun S.J."/>
            <person name="Wang Y.F."/>
        </authorList>
    </citation>
    <scope>FUNCTION</scope>
    <scope>INTERACTION WITH KAT1</scope>
    <scope>INDUCTION BY DROUGHT STRESS</scope>
</reference>
<dbReference type="EMBL" id="AB009056">
    <property type="protein sequence ID" value="BAB08726.1"/>
    <property type="molecule type" value="Genomic_DNA"/>
</dbReference>
<dbReference type="EMBL" id="CP002688">
    <property type="protein sequence ID" value="AED93247.1"/>
    <property type="molecule type" value="Genomic_DNA"/>
</dbReference>
<dbReference type="EMBL" id="BT015364">
    <property type="protein sequence ID" value="AAU05487.1"/>
    <property type="molecule type" value="mRNA"/>
</dbReference>
<dbReference type="EMBL" id="BT015721">
    <property type="protein sequence ID" value="AAU45219.1"/>
    <property type="molecule type" value="mRNA"/>
</dbReference>
<dbReference type="RefSeq" id="NP_197791.1">
    <property type="nucleotide sequence ID" value="NM_122308.5"/>
</dbReference>
<dbReference type="SMR" id="Q9FLV9"/>
<dbReference type="BioGRID" id="17743">
    <property type="interactions" value="3"/>
</dbReference>
<dbReference type="FunCoup" id="Q9FLV9">
    <property type="interactions" value="3"/>
</dbReference>
<dbReference type="STRING" id="3702.Q9FLV9"/>
<dbReference type="TCDB" id="2.A.16.5.2">
    <property type="family name" value="the telurite-resistance/dicarboxylate transporter (tdt) family"/>
</dbReference>
<dbReference type="iPTMnet" id="Q9FLV9"/>
<dbReference type="PaxDb" id="3702-AT5G24030.1"/>
<dbReference type="ProteomicsDB" id="234571"/>
<dbReference type="EnsemblPlants" id="AT5G24030.1">
    <property type="protein sequence ID" value="AT5G24030.1"/>
    <property type="gene ID" value="AT5G24030"/>
</dbReference>
<dbReference type="GeneID" id="832468"/>
<dbReference type="Gramene" id="AT5G24030.1">
    <property type="protein sequence ID" value="AT5G24030.1"/>
    <property type="gene ID" value="AT5G24030"/>
</dbReference>
<dbReference type="KEGG" id="ath:AT5G24030"/>
<dbReference type="Araport" id="AT5G24030"/>
<dbReference type="TAIR" id="AT5G24030">
    <property type="gene designation" value="SLAH3"/>
</dbReference>
<dbReference type="eggNOG" id="ENOG502QQKN">
    <property type="taxonomic scope" value="Eukaryota"/>
</dbReference>
<dbReference type="HOGENOM" id="CLU_017679_1_0_1"/>
<dbReference type="InParanoid" id="Q9FLV9"/>
<dbReference type="OMA" id="QPMPRNT"/>
<dbReference type="PhylomeDB" id="Q9FLV9"/>
<dbReference type="PRO" id="PR:Q9FLV9"/>
<dbReference type="Proteomes" id="UP000006548">
    <property type="component" value="Chromosome 5"/>
</dbReference>
<dbReference type="ExpressionAtlas" id="Q9FLV9">
    <property type="expression patterns" value="baseline and differential"/>
</dbReference>
<dbReference type="GO" id="GO:0005886">
    <property type="term" value="C:plasma membrane"/>
    <property type="evidence" value="ECO:0000314"/>
    <property type="project" value="TAIR"/>
</dbReference>
<dbReference type="GO" id="GO:0008308">
    <property type="term" value="F:voltage-gated monoatomic anion channel activity"/>
    <property type="evidence" value="ECO:0000314"/>
    <property type="project" value="TAIR"/>
</dbReference>
<dbReference type="GO" id="GO:0006821">
    <property type="term" value="P:chloride transport"/>
    <property type="evidence" value="ECO:0000315"/>
    <property type="project" value="TAIR"/>
</dbReference>
<dbReference type="GO" id="GO:0006873">
    <property type="term" value="P:intracellular monoatomic ion homeostasis"/>
    <property type="evidence" value="ECO:0000315"/>
    <property type="project" value="TAIR"/>
</dbReference>
<dbReference type="GO" id="GO:0009651">
    <property type="term" value="P:response to salt stress"/>
    <property type="evidence" value="ECO:0000270"/>
    <property type="project" value="TAIR"/>
</dbReference>
<dbReference type="GO" id="GO:0009414">
    <property type="term" value="P:response to water deprivation"/>
    <property type="evidence" value="ECO:0000270"/>
    <property type="project" value="TAIR"/>
</dbReference>
<dbReference type="CDD" id="cd09323">
    <property type="entry name" value="TDT_SLAC1_like"/>
    <property type="match status" value="1"/>
</dbReference>
<dbReference type="Gene3D" id="1.50.10.150">
    <property type="entry name" value="Voltage-dependent anion channel"/>
    <property type="match status" value="1"/>
</dbReference>
<dbReference type="InterPro" id="IPR030183">
    <property type="entry name" value="SLAC/SLAH"/>
</dbReference>
<dbReference type="InterPro" id="IPR004695">
    <property type="entry name" value="SLAC1/Mae1/Ssu1/TehA"/>
</dbReference>
<dbReference type="InterPro" id="IPR038665">
    <property type="entry name" value="Voltage-dep_anion_channel_sf"/>
</dbReference>
<dbReference type="PANTHER" id="PTHR31269">
    <property type="entry name" value="S-TYPE ANION CHANNEL SLAH3"/>
    <property type="match status" value="1"/>
</dbReference>
<dbReference type="PANTHER" id="PTHR31269:SF2">
    <property type="entry name" value="S-TYPE ANION CHANNEL SLAH3"/>
    <property type="match status" value="1"/>
</dbReference>
<dbReference type="Pfam" id="PF03595">
    <property type="entry name" value="SLAC1"/>
    <property type="match status" value="1"/>
</dbReference>